<dbReference type="EC" id="2.7.7.4" evidence="2"/>
<dbReference type="EMBL" id="AP009179">
    <property type="protein sequence ID" value="BAF72671.1"/>
    <property type="molecule type" value="Genomic_DNA"/>
</dbReference>
<dbReference type="RefSeq" id="WP_012083481.1">
    <property type="nucleotide sequence ID" value="NC_009663.1"/>
</dbReference>
<dbReference type="SMR" id="A6QB12"/>
<dbReference type="STRING" id="387093.SUN_1721"/>
<dbReference type="KEGG" id="sun:SUN_1721"/>
<dbReference type="eggNOG" id="COG2895">
    <property type="taxonomic scope" value="Bacteria"/>
</dbReference>
<dbReference type="HOGENOM" id="CLU_007265_5_2_7"/>
<dbReference type="OrthoDB" id="9804504at2"/>
<dbReference type="UniPathway" id="UPA00140">
    <property type="reaction ID" value="UER00204"/>
</dbReference>
<dbReference type="Proteomes" id="UP000006378">
    <property type="component" value="Chromosome"/>
</dbReference>
<dbReference type="GO" id="GO:0005524">
    <property type="term" value="F:ATP binding"/>
    <property type="evidence" value="ECO:0007669"/>
    <property type="project" value="UniProtKB-KW"/>
</dbReference>
<dbReference type="GO" id="GO:0005525">
    <property type="term" value="F:GTP binding"/>
    <property type="evidence" value="ECO:0007669"/>
    <property type="project" value="UniProtKB-UniRule"/>
</dbReference>
<dbReference type="GO" id="GO:0003924">
    <property type="term" value="F:GTPase activity"/>
    <property type="evidence" value="ECO:0007669"/>
    <property type="project" value="InterPro"/>
</dbReference>
<dbReference type="GO" id="GO:0004781">
    <property type="term" value="F:sulfate adenylyltransferase (ATP) activity"/>
    <property type="evidence" value="ECO:0007669"/>
    <property type="project" value="UniProtKB-UniRule"/>
</dbReference>
<dbReference type="GO" id="GO:0070814">
    <property type="term" value="P:hydrogen sulfide biosynthetic process"/>
    <property type="evidence" value="ECO:0007669"/>
    <property type="project" value="UniProtKB-UniRule"/>
</dbReference>
<dbReference type="GO" id="GO:0000103">
    <property type="term" value="P:sulfate assimilation"/>
    <property type="evidence" value="ECO:0007669"/>
    <property type="project" value="UniProtKB-UniRule"/>
</dbReference>
<dbReference type="CDD" id="cd04166">
    <property type="entry name" value="CysN_ATPS"/>
    <property type="match status" value="1"/>
</dbReference>
<dbReference type="CDD" id="cd03695">
    <property type="entry name" value="CysN_NodQ_II"/>
    <property type="match status" value="1"/>
</dbReference>
<dbReference type="CDD" id="cd04095">
    <property type="entry name" value="CysN_NoDQ_III"/>
    <property type="match status" value="1"/>
</dbReference>
<dbReference type="FunFam" id="3.40.50.300:FF:000119">
    <property type="entry name" value="Sulfate adenylyltransferase subunit 1"/>
    <property type="match status" value="1"/>
</dbReference>
<dbReference type="Gene3D" id="3.40.50.300">
    <property type="entry name" value="P-loop containing nucleotide triphosphate hydrolases"/>
    <property type="match status" value="1"/>
</dbReference>
<dbReference type="Gene3D" id="2.40.30.10">
    <property type="entry name" value="Translation factors"/>
    <property type="match status" value="2"/>
</dbReference>
<dbReference type="HAMAP" id="MF_00062">
    <property type="entry name" value="Sulf_adenylyltr_sub1"/>
    <property type="match status" value="1"/>
</dbReference>
<dbReference type="InterPro" id="IPR041757">
    <property type="entry name" value="CysN_GTP-bd"/>
</dbReference>
<dbReference type="InterPro" id="IPR044138">
    <property type="entry name" value="CysN_II"/>
</dbReference>
<dbReference type="InterPro" id="IPR044139">
    <property type="entry name" value="CysN_NoDQ_III"/>
</dbReference>
<dbReference type="InterPro" id="IPR031157">
    <property type="entry name" value="G_TR_CS"/>
</dbReference>
<dbReference type="InterPro" id="IPR054696">
    <property type="entry name" value="GTP-eEF1A_C"/>
</dbReference>
<dbReference type="InterPro" id="IPR027417">
    <property type="entry name" value="P-loop_NTPase"/>
</dbReference>
<dbReference type="InterPro" id="IPR011779">
    <property type="entry name" value="SO4_adenylTrfase_lsu"/>
</dbReference>
<dbReference type="InterPro" id="IPR000795">
    <property type="entry name" value="T_Tr_GTP-bd_dom"/>
</dbReference>
<dbReference type="InterPro" id="IPR050100">
    <property type="entry name" value="TRAFAC_GTPase_members"/>
</dbReference>
<dbReference type="InterPro" id="IPR009000">
    <property type="entry name" value="Transl_B-barrel_sf"/>
</dbReference>
<dbReference type="InterPro" id="IPR009001">
    <property type="entry name" value="Transl_elong_EF1A/Init_IF2_C"/>
</dbReference>
<dbReference type="NCBIfam" id="TIGR02034">
    <property type="entry name" value="CysN"/>
    <property type="match status" value="1"/>
</dbReference>
<dbReference type="NCBIfam" id="NF003478">
    <property type="entry name" value="PRK05124.1"/>
    <property type="match status" value="1"/>
</dbReference>
<dbReference type="PANTHER" id="PTHR23115">
    <property type="entry name" value="TRANSLATION FACTOR"/>
    <property type="match status" value="1"/>
</dbReference>
<dbReference type="Pfam" id="PF22594">
    <property type="entry name" value="GTP-eEF1A_C"/>
    <property type="match status" value="1"/>
</dbReference>
<dbReference type="Pfam" id="PF00009">
    <property type="entry name" value="GTP_EFTU"/>
    <property type="match status" value="1"/>
</dbReference>
<dbReference type="PRINTS" id="PR00315">
    <property type="entry name" value="ELONGATNFCT"/>
</dbReference>
<dbReference type="SUPFAM" id="SSF50465">
    <property type="entry name" value="EF-Tu/eEF-1alpha/eIF2-gamma C-terminal domain"/>
    <property type="match status" value="1"/>
</dbReference>
<dbReference type="SUPFAM" id="SSF52540">
    <property type="entry name" value="P-loop containing nucleoside triphosphate hydrolases"/>
    <property type="match status" value="1"/>
</dbReference>
<dbReference type="SUPFAM" id="SSF50447">
    <property type="entry name" value="Translation proteins"/>
    <property type="match status" value="1"/>
</dbReference>
<dbReference type="PROSITE" id="PS00301">
    <property type="entry name" value="G_TR_1"/>
    <property type="match status" value="1"/>
</dbReference>
<dbReference type="PROSITE" id="PS51722">
    <property type="entry name" value="G_TR_2"/>
    <property type="match status" value="1"/>
</dbReference>
<name>CYSN_SULNB</name>
<accession>A6QB12</accession>
<keyword id="KW-0067">ATP-binding</keyword>
<keyword id="KW-0342">GTP-binding</keyword>
<keyword id="KW-0547">Nucleotide-binding</keyword>
<keyword id="KW-0548">Nucleotidyltransferase</keyword>
<keyword id="KW-0808">Transferase</keyword>
<proteinExistence type="inferred from homology"/>
<evidence type="ECO:0000250" key="1"/>
<evidence type="ECO:0000255" key="2">
    <source>
        <dbReference type="HAMAP-Rule" id="MF_00062"/>
    </source>
</evidence>
<protein>
    <recommendedName>
        <fullName evidence="2">Sulfate adenylyltransferase subunit 1</fullName>
        <ecNumber evidence="2">2.7.7.4</ecNumber>
    </recommendedName>
    <alternativeName>
        <fullName evidence="2">ATP-sulfurylase large subunit</fullName>
    </alternativeName>
    <alternativeName>
        <fullName evidence="2">Sulfate adenylate transferase</fullName>
        <shortName evidence="2">SAT</shortName>
    </alternativeName>
</protein>
<sequence length="479" mass="53639">MAKENSKIALDIEGYLKEHENKDMLRFLTCGSVDDGKSTLIGRMLYDSKMIFDDQLSAAEGESRKYGTTGEKLDMALLVDGLQSEREQGITIDVAYRFFATEKRKFIIADTPGHEQYTRNMVTGASTADVAIILIDARKGILTQTRRHSFIVNLLGIEHVIVAINKMDLVDFSEEVFDKISGAYGALADELGIKNTYYIPVSALEGDNVVDRSKRSPWFSGQPLLGLLDSMDISKEPKEEDFRFPVQYVNRPNLDFRGFCGTIAAGLVRTGDEITVLPSGKTTKVKNIVNAGDITEKNRETMTEYAYAPMAVTITTEDEVDISRGDMIVHTKNLPRVSNSLKVMLVWMDETPMEPGKTYDIKRATSVVPGFIEHINYKVDINTYEREQVHRLGLNDIASCKMVLTQPIAADAYETNRLTGSFIVVDRISNDTVGAGMIVGVSRREEDVVKLSAKEYTDAERALNLYVRENFPEWECKVI</sequence>
<gene>
    <name evidence="2" type="primary">cysN</name>
    <name type="ordered locus">SUN_1721</name>
</gene>
<organism>
    <name type="scientific">Sulfurovum sp. (strain NBC37-1)</name>
    <dbReference type="NCBI Taxonomy" id="387093"/>
    <lineage>
        <taxon>Bacteria</taxon>
        <taxon>Pseudomonadati</taxon>
        <taxon>Campylobacterota</taxon>
        <taxon>Epsilonproteobacteria</taxon>
        <taxon>Campylobacterales</taxon>
        <taxon>Sulfurovaceae</taxon>
        <taxon>Sulfurovum</taxon>
    </lineage>
</organism>
<comment type="function">
    <text evidence="2">With CysD forms the ATP sulfurylase (ATPS) that catalyzes the adenylation of sulfate producing adenosine 5'-phosphosulfate (APS) and diphosphate, the first enzymatic step in sulfur assimilation pathway. APS synthesis involves the formation of a high-energy phosphoric-sulfuric acid anhydride bond driven by GTP hydrolysis by CysN coupled to ATP hydrolysis by CysD.</text>
</comment>
<comment type="catalytic activity">
    <reaction evidence="2">
        <text>sulfate + ATP + H(+) = adenosine 5'-phosphosulfate + diphosphate</text>
        <dbReference type="Rhea" id="RHEA:18133"/>
        <dbReference type="ChEBI" id="CHEBI:15378"/>
        <dbReference type="ChEBI" id="CHEBI:16189"/>
        <dbReference type="ChEBI" id="CHEBI:30616"/>
        <dbReference type="ChEBI" id="CHEBI:33019"/>
        <dbReference type="ChEBI" id="CHEBI:58243"/>
        <dbReference type="EC" id="2.7.7.4"/>
    </reaction>
</comment>
<comment type="pathway">
    <text evidence="2">Sulfur metabolism; hydrogen sulfide biosynthesis; sulfite from sulfate: step 1/3.</text>
</comment>
<comment type="subunit">
    <text evidence="2">Heterodimer composed of CysD, the smaller subunit, and CysN.</text>
</comment>
<comment type="similarity">
    <text evidence="2">Belongs to the TRAFAC class translation factor GTPase superfamily. Classic translation factor GTPase family. CysN/NodQ subfamily.</text>
</comment>
<feature type="chain" id="PRO_1000092161" description="Sulfate adenylyltransferase subunit 1">
    <location>
        <begin position="1"/>
        <end position="479"/>
    </location>
</feature>
<feature type="domain" description="tr-type G">
    <location>
        <begin position="22"/>
        <end position="238"/>
    </location>
</feature>
<feature type="region of interest" description="G1" evidence="1">
    <location>
        <begin position="31"/>
        <end position="38"/>
    </location>
</feature>
<feature type="region of interest" description="G2" evidence="1">
    <location>
        <begin position="89"/>
        <end position="93"/>
    </location>
</feature>
<feature type="region of interest" description="G3" evidence="1">
    <location>
        <begin position="110"/>
        <end position="113"/>
    </location>
</feature>
<feature type="region of interest" description="G4" evidence="1">
    <location>
        <begin position="165"/>
        <end position="168"/>
    </location>
</feature>
<feature type="region of interest" description="G5" evidence="1">
    <location>
        <begin position="202"/>
        <end position="204"/>
    </location>
</feature>
<feature type="binding site" evidence="2">
    <location>
        <begin position="31"/>
        <end position="38"/>
    </location>
    <ligand>
        <name>GTP</name>
        <dbReference type="ChEBI" id="CHEBI:37565"/>
    </ligand>
</feature>
<feature type="binding site" evidence="2">
    <location>
        <begin position="110"/>
        <end position="114"/>
    </location>
    <ligand>
        <name>GTP</name>
        <dbReference type="ChEBI" id="CHEBI:37565"/>
    </ligand>
</feature>
<feature type="binding site" evidence="2">
    <location>
        <begin position="165"/>
        <end position="168"/>
    </location>
    <ligand>
        <name>GTP</name>
        <dbReference type="ChEBI" id="CHEBI:37565"/>
    </ligand>
</feature>
<reference key="1">
    <citation type="journal article" date="2007" name="Proc. Natl. Acad. Sci. U.S.A.">
        <title>Deep-sea vent epsilon-proteobacterial genomes provide insights into emergence of pathogens.</title>
        <authorList>
            <person name="Nakagawa S."/>
            <person name="Takaki Y."/>
            <person name="Shimamura S."/>
            <person name="Reysenbach A.-L."/>
            <person name="Takai K."/>
            <person name="Horikoshi K."/>
        </authorList>
    </citation>
    <scope>NUCLEOTIDE SEQUENCE [LARGE SCALE GENOMIC DNA]</scope>
    <source>
        <strain>NBC37-1</strain>
    </source>
</reference>